<keyword id="KW-0997">Cell inner membrane</keyword>
<keyword id="KW-1003">Cell membrane</keyword>
<keyword id="KW-0472">Membrane</keyword>
<keyword id="KW-1185">Reference proteome</keyword>
<keyword id="KW-0812">Transmembrane</keyword>
<keyword id="KW-1133">Transmembrane helix</keyword>
<evidence type="ECO:0000255" key="1"/>
<evidence type="ECO:0000305" key="2"/>
<protein>
    <recommendedName>
        <fullName>UPF0410 protein YeaQ</fullName>
    </recommendedName>
</protein>
<reference key="1">
    <citation type="journal article" date="1997" name="Science">
        <title>The complete genome sequence of Escherichia coli K-12.</title>
        <authorList>
            <person name="Blattner F.R."/>
            <person name="Plunkett G. III"/>
            <person name="Bloch C.A."/>
            <person name="Perna N.T."/>
            <person name="Burland V."/>
            <person name="Riley M."/>
            <person name="Collado-Vides J."/>
            <person name="Glasner J.D."/>
            <person name="Rode C.K."/>
            <person name="Mayhew G.F."/>
            <person name="Gregor J."/>
            <person name="Davis N.W."/>
            <person name="Kirkpatrick H.A."/>
            <person name="Goeden M.A."/>
            <person name="Rose D.J."/>
            <person name="Mau B."/>
            <person name="Shao Y."/>
        </authorList>
    </citation>
    <scope>NUCLEOTIDE SEQUENCE [LARGE SCALE GENOMIC DNA]</scope>
    <source>
        <strain>K12 / MG1655 / ATCC 47076</strain>
    </source>
</reference>
<reference key="2">
    <citation type="journal article" date="2006" name="Mol. Syst. Biol.">
        <title>Highly accurate genome sequences of Escherichia coli K-12 strains MG1655 and W3110.</title>
        <authorList>
            <person name="Hayashi K."/>
            <person name="Morooka N."/>
            <person name="Yamamoto Y."/>
            <person name="Fujita K."/>
            <person name="Isono K."/>
            <person name="Choi S."/>
            <person name="Ohtsubo E."/>
            <person name="Baba T."/>
            <person name="Wanner B.L."/>
            <person name="Mori H."/>
            <person name="Horiuchi T."/>
        </authorList>
    </citation>
    <scope>NUCLEOTIDE SEQUENCE [LARGE SCALE GENOMIC DNA]</scope>
    <source>
        <strain>K12 / W3110 / ATCC 27325 / DSM 5911</strain>
    </source>
</reference>
<gene>
    <name type="primary">yeaQ</name>
    <name type="ordered locus">b1795</name>
    <name type="ordered locus">JW1784</name>
</gene>
<name>YEAQ_ECOLI</name>
<sequence>MGILSWIIFGLIAGILAKWIMPGKDGGGFFMTILLGIVGAVVGGWISTLFGFGKVDGFNFGSFVVAVIGAIVVLFIYRKIKS</sequence>
<comment type="subcellular location">
    <subcellularLocation>
        <location evidence="2">Cell inner membrane</location>
        <topology evidence="2">Multi-pass membrane protein</topology>
    </subcellularLocation>
</comment>
<comment type="similarity">
    <text evidence="2">Belongs to the UPF0410 family.</text>
</comment>
<organism>
    <name type="scientific">Escherichia coli (strain K12)</name>
    <dbReference type="NCBI Taxonomy" id="83333"/>
    <lineage>
        <taxon>Bacteria</taxon>
        <taxon>Pseudomonadati</taxon>
        <taxon>Pseudomonadota</taxon>
        <taxon>Gammaproteobacteria</taxon>
        <taxon>Enterobacterales</taxon>
        <taxon>Enterobacteriaceae</taxon>
        <taxon>Escherichia</taxon>
    </lineage>
</organism>
<accession>P64485</accession>
<accession>P76246</accession>
<accession>Q2MB25</accession>
<feature type="chain" id="PRO_0000169025" description="UPF0410 protein YeaQ">
    <location>
        <begin position="1"/>
        <end position="82"/>
    </location>
</feature>
<feature type="transmembrane region" description="Helical" evidence="1">
    <location>
        <begin position="26"/>
        <end position="46"/>
    </location>
</feature>
<feature type="transmembrane region" description="Helical" evidence="1">
    <location>
        <begin position="57"/>
        <end position="77"/>
    </location>
</feature>
<dbReference type="EMBL" id="U00096">
    <property type="protein sequence ID" value="AAC74865.1"/>
    <property type="molecule type" value="Genomic_DNA"/>
</dbReference>
<dbReference type="EMBL" id="AP009048">
    <property type="protein sequence ID" value="BAE76531.1"/>
    <property type="molecule type" value="Genomic_DNA"/>
</dbReference>
<dbReference type="PIR" id="C64940">
    <property type="entry name" value="C64940"/>
</dbReference>
<dbReference type="RefSeq" id="NP_416309.1">
    <property type="nucleotide sequence ID" value="NC_000913.3"/>
</dbReference>
<dbReference type="RefSeq" id="WP_000512153.1">
    <property type="nucleotide sequence ID" value="NZ_STEB01000009.1"/>
</dbReference>
<dbReference type="SMR" id="P64485"/>
<dbReference type="BioGRID" id="4260331">
    <property type="interactions" value="6"/>
</dbReference>
<dbReference type="FunCoup" id="P64485">
    <property type="interactions" value="64"/>
</dbReference>
<dbReference type="STRING" id="511145.b1795"/>
<dbReference type="PaxDb" id="511145-b1795"/>
<dbReference type="EnsemblBacteria" id="AAC74865">
    <property type="protein sequence ID" value="AAC74865"/>
    <property type="gene ID" value="b1795"/>
</dbReference>
<dbReference type="GeneID" id="946311"/>
<dbReference type="KEGG" id="ecj:JW1784"/>
<dbReference type="KEGG" id="eco:b1795"/>
<dbReference type="KEGG" id="ecoc:C3026_10235"/>
<dbReference type="PATRIC" id="fig|511145.12.peg.1870"/>
<dbReference type="EchoBASE" id="EB3276"/>
<dbReference type="eggNOG" id="COG2261">
    <property type="taxonomic scope" value="Bacteria"/>
</dbReference>
<dbReference type="HOGENOM" id="CLU_160040_2_3_6"/>
<dbReference type="InParanoid" id="P64485"/>
<dbReference type="OMA" id="WIMTIVL"/>
<dbReference type="OrthoDB" id="9811343at2"/>
<dbReference type="PhylomeDB" id="P64485"/>
<dbReference type="BioCyc" id="EcoCyc:G6981-MONOMER"/>
<dbReference type="PRO" id="PR:P64485"/>
<dbReference type="Proteomes" id="UP000000625">
    <property type="component" value="Chromosome"/>
</dbReference>
<dbReference type="GO" id="GO:0005886">
    <property type="term" value="C:plasma membrane"/>
    <property type="evidence" value="ECO:0007669"/>
    <property type="project" value="UniProtKB-SubCell"/>
</dbReference>
<dbReference type="InterPro" id="IPR007341">
    <property type="entry name" value="Transgly_assoc"/>
</dbReference>
<dbReference type="NCBIfam" id="NF007771">
    <property type="entry name" value="PRK10457.1"/>
    <property type="match status" value="1"/>
</dbReference>
<dbReference type="PANTHER" id="PTHR33884:SF4">
    <property type="entry name" value="UPF0410 PROTEIN YEAQ"/>
    <property type="match status" value="1"/>
</dbReference>
<dbReference type="PANTHER" id="PTHR33884">
    <property type="entry name" value="UPF0410 PROTEIN YMGE"/>
    <property type="match status" value="1"/>
</dbReference>
<dbReference type="Pfam" id="PF04226">
    <property type="entry name" value="Transgly_assoc"/>
    <property type="match status" value="1"/>
</dbReference>
<proteinExistence type="inferred from homology"/>